<organism>
    <name type="scientific">Canis lupus familiaris</name>
    <name type="common">Dog</name>
    <name type="synonym">Canis familiaris</name>
    <dbReference type="NCBI Taxonomy" id="9615"/>
    <lineage>
        <taxon>Eukaryota</taxon>
        <taxon>Metazoa</taxon>
        <taxon>Chordata</taxon>
        <taxon>Craniata</taxon>
        <taxon>Vertebrata</taxon>
        <taxon>Euteleostomi</taxon>
        <taxon>Mammalia</taxon>
        <taxon>Eutheria</taxon>
        <taxon>Laurasiatheria</taxon>
        <taxon>Carnivora</taxon>
        <taxon>Caniformia</taxon>
        <taxon>Canidae</taxon>
        <taxon>Canis</taxon>
    </lineage>
</organism>
<accession>P49670</accession>
<comment type="function">
    <molecule>Somatostatin-14</molecule>
    <text evidence="5">Inhibits the secretion of pituitary hormones, including that of growth hormone/somatotropin (GH1), PRL, ACTH, luteinizing hormone (LH) and TSH. Also impairs ghrelin- and GnRH-stimulated secretion of GH1 and LH; the inhibition of ghrelin-stimulated secretion of GH1 can be further increased by neuronostatin.</text>
</comment>
<comment type="function">
    <molecule>Neuronostatin</molecule>
    <text evidence="3 4 5">May enhance low-glucose-induced glucagon release by pancreatic alpha cells. This effect may be mediated by binding to GPR107 and PKA activation (By similarity). May regulate cardiac contractile function (By similarity). May compromise cardiomyocyte viability. In the central nervous system, may impair memory retention and may affect hippocampal excitability. May also have anxiolytic and anorexigenic effects. May play a role in arterial pressure regulation (By similarity). May inhibit basal, but not ghrelin- or GnRH-stimulated secretion of GH1 or LH, but does not affect the release of other pituitary hormones, including PRL, ACTH, FSH or TSH. Potentiates inhibitory action of somatostatin on ghrelin-stimulated secretion of GH1, but not that on GnRH-stimulated secretion of LH (By similarity).</text>
</comment>
<comment type="subcellular location">
    <subcellularLocation>
        <location evidence="4">Secreted</location>
    </subcellularLocation>
</comment>
<comment type="PTM">
    <text evidence="4">C-terminal amidation of the neuronostatin peptide is required for its biological activity, including for the regulation of mean arterial pressure.</text>
</comment>
<comment type="similarity">
    <text evidence="7">Belongs to the somatostatin family.</text>
</comment>
<gene>
    <name type="primary">SST</name>
</gene>
<feature type="signal peptide" evidence="1">
    <location>
        <begin position="1"/>
        <end position="24"/>
    </location>
</feature>
<feature type="propeptide" id="PRO_0000033083" evidence="1">
    <location>
        <begin position="25"/>
        <end position="88"/>
    </location>
</feature>
<feature type="peptide" id="PRO_0000447374" description="Neuronostatin" evidence="5">
    <location>
        <begin position="31"/>
        <end position="43"/>
    </location>
</feature>
<feature type="peptide" id="PRO_0000033084" description="Somatostatin-28">
    <location>
        <begin position="89"/>
        <end position="116"/>
    </location>
</feature>
<feature type="peptide" id="PRO_0000033085" description="Somatostatin-14">
    <location>
        <begin position="103"/>
        <end position="116"/>
    </location>
</feature>
<feature type="region of interest" description="Disordered" evidence="6">
    <location>
        <begin position="62"/>
        <end position="99"/>
    </location>
</feature>
<feature type="modified residue" description="Alanine amide" evidence="2">
    <location>
        <position position="43"/>
    </location>
</feature>
<feature type="disulfide bond" evidence="1">
    <location>
        <begin position="105"/>
        <end position="116"/>
    </location>
</feature>
<dbReference type="EMBL" id="L42325">
    <property type="protein sequence ID" value="AAA67099.1"/>
    <property type="molecule type" value="mRNA"/>
</dbReference>
<dbReference type="RefSeq" id="NP_001003307.1">
    <property type="nucleotide sequence ID" value="NM_001003307.1"/>
</dbReference>
<dbReference type="FunCoup" id="P49670">
    <property type="interactions" value="52"/>
</dbReference>
<dbReference type="STRING" id="9615.ENSCAFP00000064277"/>
<dbReference type="PaxDb" id="9612-ENSCAFP00000020465"/>
<dbReference type="Ensembl" id="ENSCAFT00000022039.5">
    <property type="protein sequence ID" value="ENSCAFP00000020465.3"/>
    <property type="gene ID" value="ENSCAFG00000013891.5"/>
</dbReference>
<dbReference type="Ensembl" id="ENSCAFT00030035606.1">
    <property type="protein sequence ID" value="ENSCAFP00030031050.1"/>
    <property type="gene ID" value="ENSCAFG00030019362.1"/>
</dbReference>
<dbReference type="Ensembl" id="ENSCAFT00040033861.1">
    <property type="protein sequence ID" value="ENSCAFP00040029464.1"/>
    <property type="gene ID" value="ENSCAFG00040018320.1"/>
</dbReference>
<dbReference type="Ensembl" id="ENSCAFT00845040007.1">
    <property type="protein sequence ID" value="ENSCAFP00845031328.1"/>
    <property type="gene ID" value="ENSCAFG00845022661.1"/>
</dbReference>
<dbReference type="GeneID" id="403993"/>
<dbReference type="KEGG" id="cfa:403993"/>
<dbReference type="CTD" id="6750"/>
<dbReference type="VEuPathDB" id="HostDB:ENSCAFG00845022661"/>
<dbReference type="VGNC" id="VGNC:46842">
    <property type="gene designation" value="SST"/>
</dbReference>
<dbReference type="eggNOG" id="ENOG502S11K">
    <property type="taxonomic scope" value="Eukaryota"/>
</dbReference>
<dbReference type="GeneTree" id="ENSGT00510000047914"/>
<dbReference type="HOGENOM" id="CLU_124515_1_1_1"/>
<dbReference type="InParanoid" id="P49670"/>
<dbReference type="OMA" id="AEQDDMR"/>
<dbReference type="OrthoDB" id="9948948at2759"/>
<dbReference type="TreeFam" id="TF333185"/>
<dbReference type="Reactome" id="R-CFA-375276">
    <property type="pathway name" value="Peptide ligand-binding receptors"/>
</dbReference>
<dbReference type="Reactome" id="R-CFA-418594">
    <property type="pathway name" value="G alpha (i) signalling events"/>
</dbReference>
<dbReference type="Proteomes" id="UP000002254">
    <property type="component" value="Chromosome 34"/>
</dbReference>
<dbReference type="Proteomes" id="UP000694429">
    <property type="component" value="Chromosome 34"/>
</dbReference>
<dbReference type="Proteomes" id="UP000694542">
    <property type="component" value="Chromosome 34"/>
</dbReference>
<dbReference type="Proteomes" id="UP000805418">
    <property type="component" value="Chromosome 34"/>
</dbReference>
<dbReference type="Bgee" id="ENSCAFG00000013891">
    <property type="expression patterns" value="Expressed in pancreas and 27 other cell types or tissues"/>
</dbReference>
<dbReference type="GO" id="GO:0005829">
    <property type="term" value="C:cytosol"/>
    <property type="evidence" value="ECO:0007669"/>
    <property type="project" value="Ensembl"/>
</dbReference>
<dbReference type="GO" id="GO:0005615">
    <property type="term" value="C:extracellular space"/>
    <property type="evidence" value="ECO:0000318"/>
    <property type="project" value="GO_Central"/>
</dbReference>
<dbReference type="GO" id="GO:0098982">
    <property type="term" value="C:GABA-ergic synapse"/>
    <property type="evidence" value="ECO:0007669"/>
    <property type="project" value="Ensembl"/>
</dbReference>
<dbReference type="GO" id="GO:0005179">
    <property type="term" value="F:hormone activity"/>
    <property type="evidence" value="ECO:0007669"/>
    <property type="project" value="UniProtKB-KW"/>
</dbReference>
<dbReference type="GO" id="GO:0030334">
    <property type="term" value="P:regulation of cell migration"/>
    <property type="evidence" value="ECO:0000318"/>
    <property type="project" value="GO_Central"/>
</dbReference>
<dbReference type="GO" id="GO:0099072">
    <property type="term" value="P:regulation of postsynaptic membrane neurotransmitter receptor levels"/>
    <property type="evidence" value="ECO:0007669"/>
    <property type="project" value="Ensembl"/>
</dbReference>
<dbReference type="GO" id="GO:0038170">
    <property type="term" value="P:somatostatin signaling pathway"/>
    <property type="evidence" value="ECO:0007669"/>
    <property type="project" value="Ensembl"/>
</dbReference>
<dbReference type="InterPro" id="IPR004250">
    <property type="entry name" value="Somatostatin"/>
</dbReference>
<dbReference type="InterPro" id="IPR018142">
    <property type="entry name" value="Somatostatin/Cortistatin_C"/>
</dbReference>
<dbReference type="PANTHER" id="PTHR10558">
    <property type="entry name" value="SOMATOSTATIN"/>
    <property type="match status" value="1"/>
</dbReference>
<dbReference type="PANTHER" id="PTHR10558:SF2">
    <property type="entry name" value="SOMATOSTATIN"/>
    <property type="match status" value="1"/>
</dbReference>
<dbReference type="Pfam" id="PF03002">
    <property type="entry name" value="Somatostatin"/>
    <property type="match status" value="1"/>
</dbReference>
<dbReference type="PIRSF" id="PIRSF001814">
    <property type="entry name" value="Somatostatin"/>
    <property type="match status" value="1"/>
</dbReference>
<keyword id="KW-0027">Amidation</keyword>
<keyword id="KW-0165">Cleavage on pair of basic residues</keyword>
<keyword id="KW-1015">Disulfide bond</keyword>
<keyword id="KW-0372">Hormone</keyword>
<keyword id="KW-1185">Reference proteome</keyword>
<keyword id="KW-0964">Secreted</keyword>
<keyword id="KW-0732">Signal</keyword>
<proteinExistence type="inferred from homology"/>
<evidence type="ECO:0000250" key="1"/>
<evidence type="ECO:0000250" key="2">
    <source>
        <dbReference type="UniProtKB" id="P01168"/>
    </source>
</evidence>
<evidence type="ECO:0000250" key="3">
    <source>
        <dbReference type="UniProtKB" id="P60041"/>
    </source>
</evidence>
<evidence type="ECO:0000250" key="4">
    <source>
        <dbReference type="UniProtKB" id="P60042"/>
    </source>
</evidence>
<evidence type="ECO:0000250" key="5">
    <source>
        <dbReference type="UniProtKB" id="P61278"/>
    </source>
</evidence>
<evidence type="ECO:0000256" key="6">
    <source>
        <dbReference type="SAM" id="MobiDB-lite"/>
    </source>
</evidence>
<evidence type="ECO:0000305" key="7"/>
<reference key="1">
    <citation type="journal article" date="1996" name="Regul. Pept.">
        <title>Canine prosomatostatin: isolation of a cDNA, regulation of gene expression, and characterization of post-translational processing intermediates.</title>
        <authorList>
            <person name="Dickinson C.J."/>
            <person name="Delvalle J."/>
            <person name="Todisco A."/>
            <person name="Gantz I."/>
            <person name="Tong L."/>
            <person name="Finniss S."/>
            <person name="Yamada T."/>
        </authorList>
    </citation>
    <scope>NUCLEOTIDE SEQUENCE [MRNA]</scope>
    <source>
        <tissue>Gastric mucosa</tissue>
    </source>
</reference>
<name>SMS_CANLF</name>
<sequence length="116" mass="12736">MLSCRLQCALAALSIVLALGGVTCAPSDPRLRQFLQKSLAAAAGKQELAKYFLAELLSEPNQTENDALEPEDLSQAAEQDEMRLELQRSANSNPAMAPRERKAGCKNFFWKTFTSC</sequence>
<protein>
    <recommendedName>
        <fullName>Somatostatin</fullName>
    </recommendedName>
    <component>
        <recommendedName>
            <fullName>Somatostatin-28</fullName>
        </recommendedName>
    </component>
    <component>
        <recommendedName>
            <fullName>Somatostatin-14</fullName>
        </recommendedName>
    </component>
    <component>
        <recommendedName>
            <fullName>Neuronostatin</fullName>
            <shortName>NST</shortName>
        </recommendedName>
    </component>
</protein>